<feature type="signal peptide" evidence="1">
    <location>
        <begin position="1"/>
        <end position="24"/>
    </location>
</feature>
<feature type="chain" id="PRO_0000041863" description="Angiogenin">
    <location>
        <begin position="25"/>
        <end position="146"/>
    </location>
</feature>
<feature type="short sequence motif" description="Nucleolar localization signal" evidence="1">
    <location>
        <begin position="55"/>
        <end position="59"/>
    </location>
</feature>
<feature type="active site" description="Proton acceptor" evidence="1">
    <location>
        <position position="37"/>
    </location>
</feature>
<feature type="active site" description="Proton donor" evidence="1">
    <location>
        <position position="138"/>
    </location>
</feature>
<feature type="binding site" evidence="1">
    <location>
        <position position="45"/>
    </location>
    <ligand>
        <name>tRNA</name>
        <dbReference type="ChEBI" id="CHEBI:17843"/>
    </ligand>
</feature>
<feature type="binding site" evidence="1">
    <location>
        <position position="105"/>
    </location>
    <ligand>
        <name>tRNA</name>
        <dbReference type="ChEBI" id="CHEBI:17843"/>
    </ligand>
</feature>
<feature type="binding site" evidence="1">
    <location>
        <position position="127"/>
    </location>
    <ligand>
        <name>tRNA</name>
        <dbReference type="ChEBI" id="CHEBI:17843"/>
    </ligand>
</feature>
<feature type="modified residue" description="Pyrrolidone carboxylic acid" evidence="1">
    <location>
        <position position="25"/>
    </location>
</feature>
<feature type="disulfide bond" evidence="1">
    <location>
        <begin position="50"/>
        <end position="105"/>
    </location>
</feature>
<feature type="disulfide bond" evidence="1">
    <location>
        <begin position="63"/>
        <end position="116"/>
    </location>
</feature>
<feature type="disulfide bond" evidence="1">
    <location>
        <begin position="81"/>
        <end position="131"/>
    </location>
</feature>
<protein>
    <recommendedName>
        <fullName>Angiogenin</fullName>
        <ecNumber evidence="1">3.1.27.-</ecNumber>
    </recommendedName>
    <alternativeName>
        <fullName>Ribonuclease 5</fullName>
        <shortName>RNase 5</shortName>
    </alternativeName>
</protein>
<evidence type="ECO:0000250" key="1">
    <source>
        <dbReference type="UniProtKB" id="P03950"/>
    </source>
</evidence>
<evidence type="ECO:0000250" key="2">
    <source>
        <dbReference type="UniProtKB" id="P21570"/>
    </source>
</evidence>
<evidence type="ECO:0000305" key="3"/>
<dbReference type="EC" id="3.1.27.-" evidence="1"/>
<dbReference type="EMBL" id="AY450362">
    <property type="protein sequence ID" value="AAS15049.1"/>
    <property type="molecule type" value="mRNA"/>
</dbReference>
<dbReference type="RefSeq" id="NP_001075368.1">
    <property type="nucleotide sequence ID" value="NM_001081899.1"/>
</dbReference>
<dbReference type="RefSeq" id="XP_005602650.1">
    <property type="nucleotide sequence ID" value="XM_005602593.4"/>
</dbReference>
<dbReference type="RefSeq" id="XP_014588930.1">
    <property type="nucleotide sequence ID" value="XM_014733444.3"/>
</dbReference>
<dbReference type="RefSeq" id="XP_014588931.1">
    <property type="nucleotide sequence ID" value="XM_014733445.1"/>
</dbReference>
<dbReference type="RefSeq" id="XP_070082367.1">
    <property type="nucleotide sequence ID" value="XM_070226266.1"/>
</dbReference>
<dbReference type="RefSeq" id="XP_070082840.1">
    <property type="nucleotide sequence ID" value="XM_070226739.1"/>
</dbReference>
<dbReference type="SMR" id="Q5VI84"/>
<dbReference type="FunCoup" id="Q5VI84">
    <property type="interactions" value="103"/>
</dbReference>
<dbReference type="Ensembl" id="ENSECAT00000079615.1">
    <property type="protein sequence ID" value="ENSECAP00000075544.1"/>
    <property type="gene ID" value="ENSECAG00000050635.1"/>
</dbReference>
<dbReference type="Ensembl" id="ENSECAT00000080128.1">
    <property type="protein sequence ID" value="ENSECAP00000073812.1"/>
    <property type="gene ID" value="ENSECAG00000050635.1"/>
</dbReference>
<dbReference type="Ensembl" id="ENSECAT00000127323.1">
    <property type="protein sequence ID" value="ENSECAP00000062254.1"/>
    <property type="gene ID" value="ENSECAG00000050635.1"/>
</dbReference>
<dbReference type="GeneID" id="100034041"/>
<dbReference type="KEGG" id="ecb:100034041"/>
<dbReference type="CTD" id="283"/>
<dbReference type="GeneTree" id="ENSGT00940000162981"/>
<dbReference type="InParanoid" id="Q5VI84"/>
<dbReference type="OrthoDB" id="8573660at2759"/>
<dbReference type="Proteomes" id="UP000002281">
    <property type="component" value="Chromosome 1"/>
</dbReference>
<dbReference type="GO" id="GO:0015629">
    <property type="term" value="C:actin cytoskeleton"/>
    <property type="evidence" value="ECO:0007669"/>
    <property type="project" value="Ensembl"/>
</dbReference>
<dbReference type="GO" id="GO:0032311">
    <property type="term" value="C:angiogenin-PRI complex"/>
    <property type="evidence" value="ECO:0007669"/>
    <property type="project" value="Ensembl"/>
</dbReference>
<dbReference type="GO" id="GO:0005604">
    <property type="term" value="C:basement membrane"/>
    <property type="evidence" value="ECO:0007669"/>
    <property type="project" value="Ensembl"/>
</dbReference>
<dbReference type="GO" id="GO:0005694">
    <property type="term" value="C:chromosome"/>
    <property type="evidence" value="ECO:0007669"/>
    <property type="project" value="Ensembl"/>
</dbReference>
<dbReference type="GO" id="GO:0010494">
    <property type="term" value="C:cytoplasmic stress granule"/>
    <property type="evidence" value="ECO:0007669"/>
    <property type="project" value="UniProtKB-SubCell"/>
</dbReference>
<dbReference type="GO" id="GO:0030139">
    <property type="term" value="C:endocytic vesicle"/>
    <property type="evidence" value="ECO:0007669"/>
    <property type="project" value="Ensembl"/>
</dbReference>
<dbReference type="GO" id="GO:0005615">
    <property type="term" value="C:extracellular space"/>
    <property type="evidence" value="ECO:0000318"/>
    <property type="project" value="GO_Central"/>
</dbReference>
<dbReference type="GO" id="GO:0030426">
    <property type="term" value="C:growth cone"/>
    <property type="evidence" value="ECO:0000250"/>
    <property type="project" value="UniProtKB"/>
</dbReference>
<dbReference type="GO" id="GO:0043025">
    <property type="term" value="C:neuronal cell body"/>
    <property type="evidence" value="ECO:0000250"/>
    <property type="project" value="UniProtKB"/>
</dbReference>
<dbReference type="GO" id="GO:0005730">
    <property type="term" value="C:nucleolus"/>
    <property type="evidence" value="ECO:0007669"/>
    <property type="project" value="UniProtKB-SubCell"/>
</dbReference>
<dbReference type="GO" id="GO:0005634">
    <property type="term" value="C:nucleus"/>
    <property type="evidence" value="ECO:0000250"/>
    <property type="project" value="UniProtKB"/>
</dbReference>
<dbReference type="GO" id="GO:0003779">
    <property type="term" value="F:actin binding"/>
    <property type="evidence" value="ECO:0007669"/>
    <property type="project" value="Ensembl"/>
</dbReference>
<dbReference type="GO" id="GO:0005507">
    <property type="term" value="F:copper ion binding"/>
    <property type="evidence" value="ECO:0007669"/>
    <property type="project" value="Ensembl"/>
</dbReference>
<dbReference type="GO" id="GO:0003677">
    <property type="term" value="F:DNA binding"/>
    <property type="evidence" value="ECO:0007669"/>
    <property type="project" value="UniProtKB-KW"/>
</dbReference>
<dbReference type="GO" id="GO:0004519">
    <property type="term" value="F:endonuclease activity"/>
    <property type="evidence" value="ECO:0007669"/>
    <property type="project" value="UniProtKB-KW"/>
</dbReference>
<dbReference type="GO" id="GO:0008201">
    <property type="term" value="F:heparin binding"/>
    <property type="evidence" value="ECO:0007669"/>
    <property type="project" value="Ensembl"/>
</dbReference>
<dbReference type="GO" id="GO:0042277">
    <property type="term" value="F:peptide binding"/>
    <property type="evidence" value="ECO:0007669"/>
    <property type="project" value="Ensembl"/>
</dbReference>
<dbReference type="GO" id="GO:0042803">
    <property type="term" value="F:protein homodimerization activity"/>
    <property type="evidence" value="ECO:0000250"/>
    <property type="project" value="UniProtKB"/>
</dbReference>
<dbReference type="GO" id="GO:0048018">
    <property type="term" value="F:receptor ligand activity"/>
    <property type="evidence" value="ECO:0007669"/>
    <property type="project" value="Ensembl"/>
</dbReference>
<dbReference type="GO" id="GO:0043022">
    <property type="term" value="F:ribosome binding"/>
    <property type="evidence" value="ECO:0007669"/>
    <property type="project" value="Ensembl"/>
</dbReference>
<dbReference type="GO" id="GO:0004540">
    <property type="term" value="F:RNA nuclease activity"/>
    <property type="evidence" value="ECO:0000318"/>
    <property type="project" value="GO_Central"/>
</dbReference>
<dbReference type="GO" id="GO:0004549">
    <property type="term" value="F:tRNA-specific ribonuclease activity"/>
    <property type="evidence" value="ECO:0007669"/>
    <property type="project" value="Ensembl"/>
</dbReference>
<dbReference type="GO" id="GO:0001525">
    <property type="term" value="P:angiogenesis"/>
    <property type="evidence" value="ECO:0000318"/>
    <property type="project" value="GO_Central"/>
</dbReference>
<dbReference type="GO" id="GO:0019731">
    <property type="term" value="P:antibacterial humoral response"/>
    <property type="evidence" value="ECO:0000318"/>
    <property type="project" value="GO_Central"/>
</dbReference>
<dbReference type="GO" id="GO:0061844">
    <property type="term" value="P:antimicrobial humoral immune response mediated by antimicrobial peptide"/>
    <property type="evidence" value="ECO:0000318"/>
    <property type="project" value="GO_Central"/>
</dbReference>
<dbReference type="GO" id="GO:0016477">
    <property type="term" value="P:cell migration"/>
    <property type="evidence" value="ECO:0007669"/>
    <property type="project" value="Ensembl"/>
</dbReference>
<dbReference type="GO" id="GO:0050830">
    <property type="term" value="P:defense response to Gram-positive bacterium"/>
    <property type="evidence" value="ECO:0000318"/>
    <property type="project" value="GO_Central"/>
</dbReference>
<dbReference type="GO" id="GO:0071425">
    <property type="term" value="P:hematopoietic stem cell proliferation"/>
    <property type="evidence" value="ECO:0000250"/>
    <property type="project" value="UniProtKB"/>
</dbReference>
<dbReference type="GO" id="GO:0045087">
    <property type="term" value="P:innate immune response"/>
    <property type="evidence" value="ECO:0000318"/>
    <property type="project" value="GO_Central"/>
</dbReference>
<dbReference type="GO" id="GO:0043066">
    <property type="term" value="P:negative regulation of apoptotic process"/>
    <property type="evidence" value="ECO:0000250"/>
    <property type="project" value="UniProtKB"/>
</dbReference>
<dbReference type="GO" id="GO:0048662">
    <property type="term" value="P:negative regulation of smooth muscle cell proliferation"/>
    <property type="evidence" value="ECO:0007669"/>
    <property type="project" value="Ensembl"/>
</dbReference>
<dbReference type="GO" id="GO:0032055">
    <property type="term" value="P:negative regulation of translation in response to stress"/>
    <property type="evidence" value="ECO:0007669"/>
    <property type="project" value="Ensembl"/>
</dbReference>
<dbReference type="GO" id="GO:0001938">
    <property type="term" value="P:positive regulation of endothelial cell proliferation"/>
    <property type="evidence" value="ECO:0007669"/>
    <property type="project" value="Ensembl"/>
</dbReference>
<dbReference type="GO" id="GO:0042327">
    <property type="term" value="P:positive regulation of phosphorylation"/>
    <property type="evidence" value="ECO:0007669"/>
    <property type="project" value="Ensembl"/>
</dbReference>
<dbReference type="GO" id="GO:0050714">
    <property type="term" value="P:positive regulation of protein secretion"/>
    <property type="evidence" value="ECO:0007669"/>
    <property type="project" value="Ensembl"/>
</dbReference>
<dbReference type="GO" id="GO:0009725">
    <property type="term" value="P:response to hormone"/>
    <property type="evidence" value="ECO:0007669"/>
    <property type="project" value="Ensembl"/>
</dbReference>
<dbReference type="GO" id="GO:0001666">
    <property type="term" value="P:response to hypoxia"/>
    <property type="evidence" value="ECO:0007669"/>
    <property type="project" value="Ensembl"/>
</dbReference>
<dbReference type="GO" id="GO:0009303">
    <property type="term" value="P:rRNA transcription"/>
    <property type="evidence" value="ECO:0007669"/>
    <property type="project" value="Ensembl"/>
</dbReference>
<dbReference type="GO" id="GO:0034063">
    <property type="term" value="P:stress granule assembly"/>
    <property type="evidence" value="ECO:0007669"/>
    <property type="project" value="Ensembl"/>
</dbReference>
<dbReference type="CDD" id="cd06265">
    <property type="entry name" value="RNase_A_canonical"/>
    <property type="match status" value="1"/>
</dbReference>
<dbReference type="FunFam" id="3.10.130.10:FF:000001">
    <property type="entry name" value="Ribonuclease pancreatic"/>
    <property type="match status" value="1"/>
</dbReference>
<dbReference type="Gene3D" id="3.10.130.10">
    <property type="entry name" value="Ribonuclease A-like domain"/>
    <property type="match status" value="1"/>
</dbReference>
<dbReference type="InterPro" id="IPR001427">
    <property type="entry name" value="RNaseA"/>
</dbReference>
<dbReference type="InterPro" id="IPR036816">
    <property type="entry name" value="RNaseA-like_dom_sf"/>
</dbReference>
<dbReference type="InterPro" id="IPR023411">
    <property type="entry name" value="RNaseA_AS"/>
</dbReference>
<dbReference type="InterPro" id="IPR023412">
    <property type="entry name" value="RNaseA_domain"/>
</dbReference>
<dbReference type="PANTHER" id="PTHR11437:SF60">
    <property type="entry name" value="ANGIOGENIN"/>
    <property type="match status" value="1"/>
</dbReference>
<dbReference type="PANTHER" id="PTHR11437">
    <property type="entry name" value="RIBONUCLEASE"/>
    <property type="match status" value="1"/>
</dbReference>
<dbReference type="Pfam" id="PF00074">
    <property type="entry name" value="RnaseA"/>
    <property type="match status" value="1"/>
</dbReference>
<dbReference type="PRINTS" id="PR00794">
    <property type="entry name" value="RIBONUCLEASE"/>
</dbReference>
<dbReference type="SMART" id="SM00092">
    <property type="entry name" value="RNAse_Pc"/>
    <property type="match status" value="1"/>
</dbReference>
<dbReference type="SUPFAM" id="SSF54076">
    <property type="entry name" value="RNase A-like"/>
    <property type="match status" value="1"/>
</dbReference>
<dbReference type="PROSITE" id="PS00127">
    <property type="entry name" value="RNASE_PANCREATIC"/>
    <property type="match status" value="1"/>
</dbReference>
<keyword id="KW-0037">Angiogenesis</keyword>
<keyword id="KW-0963">Cytoplasm</keyword>
<keyword id="KW-0217">Developmental protein</keyword>
<keyword id="KW-0221">Differentiation</keyword>
<keyword id="KW-1015">Disulfide bond</keyword>
<keyword id="KW-0238">DNA-binding</keyword>
<keyword id="KW-0255">Endonuclease</keyword>
<keyword id="KW-0378">Hydrolase</keyword>
<keyword id="KW-0540">Nuclease</keyword>
<keyword id="KW-0539">Nucleus</keyword>
<keyword id="KW-0652">Protein synthesis inhibitor</keyword>
<keyword id="KW-0873">Pyrrolidone carboxylic acid</keyword>
<keyword id="KW-1185">Reference proteome</keyword>
<keyword id="KW-0964">Secreted</keyword>
<keyword id="KW-0732">Signal</keyword>
<keyword id="KW-0346">Stress response</keyword>
<name>ANGI_HORSE</name>
<sequence>MAMSLCPLLLVFVLGLGLTPPSLAQDDSRYRQFLTKHYDANPRGRNDRYCESMMVRRHLTTPCKDTNTFIHGSKSSIKAICGNKNGNPYGETLRISKTRFQVTTCKHAGGSPRPPCRYRATPGFRSIVIACENGLPVHFDESFFRP</sequence>
<reference key="1">
    <citation type="submission" date="2003-10" db="EMBL/GenBank/DDBJ databases">
        <title>Cloning, sequencing, and expression of horse angiogenin.</title>
        <authorList>
            <person name="Chang S.-I."/>
            <person name="Nguyen H.G."/>
        </authorList>
    </citation>
    <scope>NUCLEOTIDE SEQUENCE [MRNA]</scope>
    <source>
        <strain>Quarter Horse</strain>
    </source>
</reference>
<proteinExistence type="evidence at transcript level"/>
<gene>
    <name type="primary">ANG</name>
    <name type="synonym">RNASE5</name>
</gene>
<comment type="function">
    <text evidence="1 2">Secreted ribonuclease that can either promote or restrict cell proliferation of target cells, depending on the context. Endocytosed in target cells via its receptor PLXNB2 and translocates to the cytoplasm or nucleus. Under stress conditions, localizes to the cytoplasm and promotes the assembly of stress granules (SGs): specifically cleaves a subset of tRNAs within anticodon loops to produce tRNA-derived stress-induced fragments (tiRNAs), resulting in translation repression and inhibition of cell proliferation (By similarity). tiRNas also prevent formation of apoptosome, thereby promoting cell survival (By similarity). Preferentially cleaves RNAs between a pyrimidine and an adenosine residue, suggesting that it cleaves the anticodon loop of tRNA(Ala) (32-UUAGCAU-38) after positions 33 and 36. Cleaves a subset of tRNAs, including tRNA(Ala), tRNA(Glu), tRNA(Gly), tRNA(Lys), tRNA(Val), tRNA(His), tRNA(Asp) and tRNA(Sec). Under growth conditions and in differentiated cells, translocates to the nucleus and stimulates ribosomal RNA (rRNA) transcription, including that containing the initiation site sequences of 45S rRNA, thereby promoting cell growth and proliferation. Angiogenin induces vascularization of normal and malignant tissues via its ability to promote rRNA transcription. Involved in hematopoietic stem and progenitor cell (HSPC) growth and survival by promoting rRNA transcription in growth conditions and inhibiting translation in response to stress, respectively. Mediates the crosstalk between myeloid and intestinal epithelial cells to protect the intestinal epithelial barrier integrity: secreted by myeloid cells and promotes intestinal epithelial cells proliferation and survival (By similarity). Also mediates osteoclast-endothelial cell crosstalk in growing bone: produced by osteoclasts and protects the neighboring vascular cells against senescence by promoting rRNA transcription (By similarity).</text>
</comment>
<comment type="activity regulation">
    <text evidence="1">Has weak tRNA ribonuclease activity by itself due to partial autoinhibition by its C-terminus, which folds into a short alpha-helix that partially occludes the substrate-binding site. In absence of stress, the ribonuclease activity is inhibited by RNH1 in the cytoplasm. In response to stress, dissociates from RNH1 in the cytoplasm and associates with cytoplasmic ribosomes with vacant A-sites: ribosomes directly activate the tRNA ribonuclease activity of ANG by refolding the C-terminal alpha-helix. In response to stress, the angiogenic activity of ANG is inhibited by RNH1 in the nucleus.</text>
</comment>
<comment type="subunit">
    <text evidence="1">Homodimer. Interacts with RNH1; inhibiting ANG ribonuclease activity. Interacts with PCNA.</text>
</comment>
<comment type="subcellular location">
    <subcellularLocation>
        <location evidence="1">Secreted</location>
    </subcellularLocation>
    <subcellularLocation>
        <location evidence="1">Nucleus</location>
    </subcellularLocation>
    <subcellularLocation>
        <location evidence="1">Nucleus</location>
        <location evidence="1">Nucleolus</location>
    </subcellularLocation>
    <subcellularLocation>
        <location evidence="1">Cytoplasm</location>
        <location evidence="1">Stress granule</location>
    </subcellularLocation>
    <text evidence="1">The secreted protein is rapidly endocytosed by target cells following interaction with PLXNB2 receptor and translocated to the cytoplasm and nucleus. In the nucleus, accumulates in the nucleolus and binds to DNA.</text>
</comment>
<comment type="similarity">
    <text evidence="3">Belongs to the pancreatic ribonuclease family.</text>
</comment>
<organism>
    <name type="scientific">Equus caballus</name>
    <name type="common">Horse</name>
    <dbReference type="NCBI Taxonomy" id="9796"/>
    <lineage>
        <taxon>Eukaryota</taxon>
        <taxon>Metazoa</taxon>
        <taxon>Chordata</taxon>
        <taxon>Craniata</taxon>
        <taxon>Vertebrata</taxon>
        <taxon>Euteleostomi</taxon>
        <taxon>Mammalia</taxon>
        <taxon>Eutheria</taxon>
        <taxon>Laurasiatheria</taxon>
        <taxon>Perissodactyla</taxon>
        <taxon>Equidae</taxon>
        <taxon>Equus</taxon>
    </lineage>
</organism>
<accession>Q5VI84</accession>